<organism>
    <name type="scientific">Schizosaccharomyces pombe (strain 972 / ATCC 24843)</name>
    <name type="common">Fission yeast</name>
    <dbReference type="NCBI Taxonomy" id="284812"/>
    <lineage>
        <taxon>Eukaryota</taxon>
        <taxon>Fungi</taxon>
        <taxon>Dikarya</taxon>
        <taxon>Ascomycota</taxon>
        <taxon>Taphrinomycotina</taxon>
        <taxon>Schizosaccharomycetes</taxon>
        <taxon>Schizosaccharomycetales</taxon>
        <taxon>Schizosaccharomycetaceae</taxon>
        <taxon>Schizosaccharomyces</taxon>
    </lineage>
</organism>
<gene>
    <name type="ORF">SPAC3C7.01c</name>
    <name type="ORF">SPAC732.03c</name>
</gene>
<keyword id="KW-1185">Reference proteome</keyword>
<sequence length="611" mass="70860">MNQDVRVFPDSIYLSCSKKKASLRIDRVDGCLSLSNSLDLSKTPDYNNVQLYGFIRLKIYKYVVLVTSCDLHAAILGNNIYRARKFAIFPITRTLPFSTGLLNIKDEEELHYISLLNKHLSKGQILFSPTLDLTCSLQRLRVLTQSFELTSKYNYRFFWNKYAFHELIELTNKDLGFQEWIQPMIQGNIAITNSFLKTYNLRLCVITRHSPDYAGTRYFTRGVNAQGSAANFNEIEQIIMIESPITLEEQMVLSFTQIRGSIPMFWAEVNDLHYRPLLSLQPLDYSETVFGKHFQELANDYGDNLVVVNLLDQKGREAPLRSGFEKLCKRNKNPPLSYVYYDYHKQGSRNLPLFLAEIQSLLIEGKYYAEHGSKTTAMQTNFVRTNCMDCLDRTNVIQTSIAQFILNMQLHDIGVLSSSESLEEYDSFLQDFRLIWANTGDYISDLYTGTPALKGDVTRHGTRTIFGAFKDLLNCFRRYILNNFFDGMLQDSYDLGLGVFRPYDSLSIPDLPLRFHWTRFVAPGIFLFTTIILTIQELFGNPSLFCRLLYSIPMVNAGIYLYFHRRQYVNWPRLVLPTYAKGGWFSFRNHFRNITLKVFRFLRSGSFKKSV</sequence>
<name>YF51_SCHPO</name>
<feature type="chain" id="PRO_0000116734" description="Uncharacterized protein C3C7.01c">
    <location>
        <begin position="1"/>
        <end position="611"/>
    </location>
</feature>
<feature type="domain" description="SAC" evidence="1">
    <location>
        <begin position="51"/>
        <end position="351"/>
    </location>
</feature>
<protein>
    <recommendedName>
        <fullName>Uncharacterized protein C3C7.01c</fullName>
    </recommendedName>
</protein>
<evidence type="ECO:0000255" key="1">
    <source>
        <dbReference type="PROSITE-ProRule" id="PRU00183"/>
    </source>
</evidence>
<evidence type="ECO:0000305" key="2"/>
<proteinExistence type="predicted"/>
<dbReference type="EMBL" id="CU329670">
    <property type="protein sequence ID" value="CAB62426.2"/>
    <property type="molecule type" value="Genomic_DNA"/>
</dbReference>
<dbReference type="RefSeq" id="XP_001713064.1">
    <property type="nucleotide sequence ID" value="XM_001713012.2"/>
</dbReference>
<dbReference type="SMR" id="O14127"/>
<dbReference type="BioGRID" id="280588">
    <property type="interactions" value="26"/>
</dbReference>
<dbReference type="FunCoup" id="O14127">
    <property type="interactions" value="169"/>
</dbReference>
<dbReference type="STRING" id="284812.O14127"/>
<dbReference type="iPTMnet" id="O14127"/>
<dbReference type="PaxDb" id="4896-SPAC3C7.01c.1"/>
<dbReference type="EnsemblFungi" id="SPAC3C7.01c.1">
    <property type="protein sequence ID" value="SPAC3C7.01c.1:pep"/>
    <property type="gene ID" value="SPAC3C7.01c"/>
</dbReference>
<dbReference type="PomBase" id="SPAC3C7.01c"/>
<dbReference type="VEuPathDB" id="FungiDB:SPAC3C7.01c"/>
<dbReference type="eggNOG" id="KOG1889">
    <property type="taxonomic scope" value="Eukaryota"/>
</dbReference>
<dbReference type="HOGENOM" id="CLU_003016_7_4_1"/>
<dbReference type="InParanoid" id="O14127"/>
<dbReference type="OMA" id="ERYYLYL"/>
<dbReference type="PhylomeDB" id="O14127"/>
<dbReference type="Reactome" id="R-SPO-1483248">
    <property type="pathway name" value="Synthesis of PIPs at the ER membrane"/>
</dbReference>
<dbReference type="Reactome" id="R-SPO-1660514">
    <property type="pathway name" value="Synthesis of PIPs at the Golgi membrane"/>
</dbReference>
<dbReference type="PRO" id="PR:O14127"/>
<dbReference type="Proteomes" id="UP000002485">
    <property type="component" value="Chromosome I"/>
</dbReference>
<dbReference type="GO" id="GO:0005783">
    <property type="term" value="C:endoplasmic reticulum"/>
    <property type="evidence" value="ECO:0000318"/>
    <property type="project" value="GO_Central"/>
</dbReference>
<dbReference type="GO" id="GO:0005789">
    <property type="term" value="C:endoplasmic reticulum membrane"/>
    <property type="evidence" value="ECO:0000266"/>
    <property type="project" value="PomBase"/>
</dbReference>
<dbReference type="GO" id="GO:0005794">
    <property type="term" value="C:Golgi apparatus"/>
    <property type="evidence" value="ECO:0000314"/>
    <property type="project" value="PomBase"/>
</dbReference>
<dbReference type="GO" id="GO:0000139">
    <property type="term" value="C:Golgi membrane"/>
    <property type="evidence" value="ECO:0000266"/>
    <property type="project" value="PomBase"/>
</dbReference>
<dbReference type="GO" id="GO:0017059">
    <property type="term" value="C:serine palmitoyltransferase complex"/>
    <property type="evidence" value="ECO:0000266"/>
    <property type="project" value="PomBase"/>
</dbReference>
<dbReference type="GO" id="GO:0043812">
    <property type="term" value="F:phosphatidylinositol-4-phosphate phosphatase activity"/>
    <property type="evidence" value="ECO:0000318"/>
    <property type="project" value="GO_Central"/>
</dbReference>
<dbReference type="GO" id="GO:0046856">
    <property type="term" value="P:phosphatidylinositol dephosphorylation"/>
    <property type="evidence" value="ECO:0000318"/>
    <property type="project" value="GO_Central"/>
</dbReference>
<dbReference type="GO" id="GO:0046512">
    <property type="term" value="P:sphingosine biosynthetic process"/>
    <property type="evidence" value="ECO:0000305"/>
    <property type="project" value="PomBase"/>
</dbReference>
<dbReference type="InterPro" id="IPR002013">
    <property type="entry name" value="SAC_dom"/>
</dbReference>
<dbReference type="PANTHER" id="PTHR45662">
    <property type="entry name" value="PHOSPHATIDYLINOSITIDE PHOSPHATASE SAC1"/>
    <property type="match status" value="1"/>
</dbReference>
<dbReference type="PANTHER" id="PTHR45662:SF2">
    <property type="entry name" value="PHOSPHATIDYLINOSITOL-3-PHOSPHATASE SAC1"/>
    <property type="match status" value="1"/>
</dbReference>
<dbReference type="Pfam" id="PF02383">
    <property type="entry name" value="Syja_N"/>
    <property type="match status" value="1"/>
</dbReference>
<dbReference type="PROSITE" id="PS50275">
    <property type="entry name" value="SAC"/>
    <property type="match status" value="1"/>
</dbReference>
<comment type="similarity">
    <text evidence="2">To yeast RSD1 and S.pombe SpBC19F5.03.</text>
</comment>
<reference key="1">
    <citation type="journal article" date="2002" name="Nature">
        <title>The genome sequence of Schizosaccharomyces pombe.</title>
        <authorList>
            <person name="Wood V."/>
            <person name="Gwilliam R."/>
            <person name="Rajandream M.A."/>
            <person name="Lyne M.H."/>
            <person name="Lyne R."/>
            <person name="Stewart A."/>
            <person name="Sgouros J.G."/>
            <person name="Peat N."/>
            <person name="Hayles J."/>
            <person name="Baker S.G."/>
            <person name="Basham D."/>
            <person name="Bowman S."/>
            <person name="Brooks K."/>
            <person name="Brown D."/>
            <person name="Brown S."/>
            <person name="Chillingworth T."/>
            <person name="Churcher C.M."/>
            <person name="Collins M."/>
            <person name="Connor R."/>
            <person name="Cronin A."/>
            <person name="Davis P."/>
            <person name="Feltwell T."/>
            <person name="Fraser A."/>
            <person name="Gentles S."/>
            <person name="Goble A."/>
            <person name="Hamlin N."/>
            <person name="Harris D.E."/>
            <person name="Hidalgo J."/>
            <person name="Hodgson G."/>
            <person name="Holroyd S."/>
            <person name="Hornsby T."/>
            <person name="Howarth S."/>
            <person name="Huckle E.J."/>
            <person name="Hunt S."/>
            <person name="Jagels K."/>
            <person name="James K.D."/>
            <person name="Jones L."/>
            <person name="Jones M."/>
            <person name="Leather S."/>
            <person name="McDonald S."/>
            <person name="McLean J."/>
            <person name="Mooney P."/>
            <person name="Moule S."/>
            <person name="Mungall K.L."/>
            <person name="Murphy L.D."/>
            <person name="Niblett D."/>
            <person name="Odell C."/>
            <person name="Oliver K."/>
            <person name="O'Neil S."/>
            <person name="Pearson D."/>
            <person name="Quail M.A."/>
            <person name="Rabbinowitsch E."/>
            <person name="Rutherford K.M."/>
            <person name="Rutter S."/>
            <person name="Saunders D."/>
            <person name="Seeger K."/>
            <person name="Sharp S."/>
            <person name="Skelton J."/>
            <person name="Simmonds M.N."/>
            <person name="Squares R."/>
            <person name="Squares S."/>
            <person name="Stevens K."/>
            <person name="Taylor K."/>
            <person name="Taylor R.G."/>
            <person name="Tivey A."/>
            <person name="Walsh S.V."/>
            <person name="Warren T."/>
            <person name="Whitehead S."/>
            <person name="Woodward J.R."/>
            <person name="Volckaert G."/>
            <person name="Aert R."/>
            <person name="Robben J."/>
            <person name="Grymonprez B."/>
            <person name="Weltjens I."/>
            <person name="Vanstreels E."/>
            <person name="Rieger M."/>
            <person name="Schaefer M."/>
            <person name="Mueller-Auer S."/>
            <person name="Gabel C."/>
            <person name="Fuchs M."/>
            <person name="Duesterhoeft A."/>
            <person name="Fritzc C."/>
            <person name="Holzer E."/>
            <person name="Moestl D."/>
            <person name="Hilbert H."/>
            <person name="Borzym K."/>
            <person name="Langer I."/>
            <person name="Beck A."/>
            <person name="Lehrach H."/>
            <person name="Reinhardt R."/>
            <person name="Pohl T.M."/>
            <person name="Eger P."/>
            <person name="Zimmermann W."/>
            <person name="Wedler H."/>
            <person name="Wambutt R."/>
            <person name="Purnelle B."/>
            <person name="Goffeau A."/>
            <person name="Cadieu E."/>
            <person name="Dreano S."/>
            <person name="Gloux S."/>
            <person name="Lelaure V."/>
            <person name="Mottier S."/>
            <person name="Galibert F."/>
            <person name="Aves S.J."/>
            <person name="Xiang Z."/>
            <person name="Hunt C."/>
            <person name="Moore K."/>
            <person name="Hurst S.M."/>
            <person name="Lucas M."/>
            <person name="Rochet M."/>
            <person name="Gaillardin C."/>
            <person name="Tallada V.A."/>
            <person name="Garzon A."/>
            <person name="Thode G."/>
            <person name="Daga R.R."/>
            <person name="Cruzado L."/>
            <person name="Jimenez J."/>
            <person name="Sanchez M."/>
            <person name="del Rey F."/>
            <person name="Benito J."/>
            <person name="Dominguez A."/>
            <person name="Revuelta J.L."/>
            <person name="Moreno S."/>
            <person name="Armstrong J."/>
            <person name="Forsburg S.L."/>
            <person name="Cerutti L."/>
            <person name="Lowe T."/>
            <person name="McCombie W.R."/>
            <person name="Paulsen I."/>
            <person name="Potashkin J."/>
            <person name="Shpakovski G.V."/>
            <person name="Ussery D."/>
            <person name="Barrell B.G."/>
            <person name="Nurse P."/>
        </authorList>
    </citation>
    <scope>NUCLEOTIDE SEQUENCE [LARGE SCALE GENOMIC DNA]</scope>
    <source>
        <strain>972 / ATCC 24843</strain>
    </source>
</reference>
<accession>O14127</accession>
<accession>Q9URZ6</accession>